<sequence>MAKAPIRARKRVRKQVSDGVAHIHASFNNTIVTITDRQGNALGWATAGGSGFRGSRKSTPFAAQVAAERCADAVKEYGIKNLEVMVKGPGPGRESTIRALNAAGFRITNITDVTPIPHNGCRPPKKRRV</sequence>
<organism>
    <name type="scientific">Escherichia coli (strain ATCC 8739 / DSM 1576 / NBRC 3972 / NCIMB 8545 / WDCM 00012 / Crooks)</name>
    <dbReference type="NCBI Taxonomy" id="481805"/>
    <lineage>
        <taxon>Bacteria</taxon>
        <taxon>Pseudomonadati</taxon>
        <taxon>Pseudomonadota</taxon>
        <taxon>Gammaproteobacteria</taxon>
        <taxon>Enterobacterales</taxon>
        <taxon>Enterobacteriaceae</taxon>
        <taxon>Escherichia</taxon>
    </lineage>
</organism>
<comment type="function">
    <text evidence="1">Located on the platform of the 30S subunit, it bridges several disparate RNA helices of the 16S rRNA. Forms part of the Shine-Dalgarno cleft in the 70S ribosome.</text>
</comment>
<comment type="subunit">
    <text evidence="1">Part of the 30S ribosomal subunit. Interacts with proteins S7 and S18. Binds to IF-3.</text>
</comment>
<comment type="similarity">
    <text evidence="1">Belongs to the universal ribosomal protein uS11 family.</text>
</comment>
<feature type="chain" id="PRO_1000086189" description="Small ribosomal subunit protein uS11">
    <location>
        <begin position="1"/>
        <end position="129"/>
    </location>
</feature>
<reference key="1">
    <citation type="submission" date="2008-02" db="EMBL/GenBank/DDBJ databases">
        <title>Complete sequence of Escherichia coli C str. ATCC 8739.</title>
        <authorList>
            <person name="Copeland A."/>
            <person name="Lucas S."/>
            <person name="Lapidus A."/>
            <person name="Glavina del Rio T."/>
            <person name="Dalin E."/>
            <person name="Tice H."/>
            <person name="Bruce D."/>
            <person name="Goodwin L."/>
            <person name="Pitluck S."/>
            <person name="Kiss H."/>
            <person name="Brettin T."/>
            <person name="Detter J.C."/>
            <person name="Han C."/>
            <person name="Kuske C.R."/>
            <person name="Schmutz J."/>
            <person name="Larimer F."/>
            <person name="Land M."/>
            <person name="Hauser L."/>
            <person name="Kyrpides N."/>
            <person name="Mikhailova N."/>
            <person name="Ingram L."/>
            <person name="Richardson P."/>
        </authorList>
    </citation>
    <scope>NUCLEOTIDE SEQUENCE [LARGE SCALE GENOMIC DNA]</scope>
    <source>
        <strain>ATCC 8739 / DSM 1576 / NBRC 3972 / NCIMB 8545 / WDCM 00012 / Crooks</strain>
    </source>
</reference>
<proteinExistence type="inferred from homology"/>
<name>RS11_ECOLC</name>
<evidence type="ECO:0000255" key="1">
    <source>
        <dbReference type="HAMAP-Rule" id="MF_01310"/>
    </source>
</evidence>
<evidence type="ECO:0000305" key="2"/>
<dbReference type="EMBL" id="CP000946">
    <property type="protein sequence ID" value="ACA76094.1"/>
    <property type="molecule type" value="Genomic_DNA"/>
</dbReference>
<dbReference type="RefSeq" id="WP_001029684.1">
    <property type="nucleotide sequence ID" value="NZ_MTFT01000014.1"/>
</dbReference>
<dbReference type="SMR" id="B1IQ02"/>
<dbReference type="GeneID" id="93778690"/>
<dbReference type="KEGG" id="ecl:EcolC_0416"/>
<dbReference type="HOGENOM" id="CLU_072439_5_0_6"/>
<dbReference type="GO" id="GO:1990904">
    <property type="term" value="C:ribonucleoprotein complex"/>
    <property type="evidence" value="ECO:0007669"/>
    <property type="project" value="UniProtKB-KW"/>
</dbReference>
<dbReference type="GO" id="GO:0005840">
    <property type="term" value="C:ribosome"/>
    <property type="evidence" value="ECO:0007669"/>
    <property type="project" value="UniProtKB-KW"/>
</dbReference>
<dbReference type="GO" id="GO:0019843">
    <property type="term" value="F:rRNA binding"/>
    <property type="evidence" value="ECO:0007669"/>
    <property type="project" value="UniProtKB-UniRule"/>
</dbReference>
<dbReference type="GO" id="GO:0003735">
    <property type="term" value="F:structural constituent of ribosome"/>
    <property type="evidence" value="ECO:0007669"/>
    <property type="project" value="InterPro"/>
</dbReference>
<dbReference type="GO" id="GO:0006412">
    <property type="term" value="P:translation"/>
    <property type="evidence" value="ECO:0007669"/>
    <property type="project" value="UniProtKB-UniRule"/>
</dbReference>
<dbReference type="FunFam" id="3.30.420.80:FF:000001">
    <property type="entry name" value="30S ribosomal protein S11"/>
    <property type="match status" value="1"/>
</dbReference>
<dbReference type="Gene3D" id="3.30.420.80">
    <property type="entry name" value="Ribosomal protein S11"/>
    <property type="match status" value="1"/>
</dbReference>
<dbReference type="HAMAP" id="MF_01310">
    <property type="entry name" value="Ribosomal_uS11"/>
    <property type="match status" value="1"/>
</dbReference>
<dbReference type="InterPro" id="IPR001971">
    <property type="entry name" value="Ribosomal_uS11"/>
</dbReference>
<dbReference type="InterPro" id="IPR019981">
    <property type="entry name" value="Ribosomal_uS11_bac-type"/>
</dbReference>
<dbReference type="InterPro" id="IPR018102">
    <property type="entry name" value="Ribosomal_uS11_CS"/>
</dbReference>
<dbReference type="InterPro" id="IPR036967">
    <property type="entry name" value="Ribosomal_uS11_sf"/>
</dbReference>
<dbReference type="NCBIfam" id="NF003698">
    <property type="entry name" value="PRK05309.1"/>
    <property type="match status" value="1"/>
</dbReference>
<dbReference type="NCBIfam" id="TIGR03632">
    <property type="entry name" value="uS11_bact"/>
    <property type="match status" value="1"/>
</dbReference>
<dbReference type="PANTHER" id="PTHR11759">
    <property type="entry name" value="40S RIBOSOMAL PROTEIN S14/30S RIBOSOMAL PROTEIN S11"/>
    <property type="match status" value="1"/>
</dbReference>
<dbReference type="Pfam" id="PF00411">
    <property type="entry name" value="Ribosomal_S11"/>
    <property type="match status" value="1"/>
</dbReference>
<dbReference type="PIRSF" id="PIRSF002131">
    <property type="entry name" value="Ribosomal_S11"/>
    <property type="match status" value="1"/>
</dbReference>
<dbReference type="SUPFAM" id="SSF53137">
    <property type="entry name" value="Translational machinery components"/>
    <property type="match status" value="1"/>
</dbReference>
<dbReference type="PROSITE" id="PS00054">
    <property type="entry name" value="RIBOSOMAL_S11"/>
    <property type="match status" value="1"/>
</dbReference>
<gene>
    <name evidence="1" type="primary">rpsK</name>
    <name type="ordered locus">EcolC_0416</name>
</gene>
<keyword id="KW-0687">Ribonucleoprotein</keyword>
<keyword id="KW-0689">Ribosomal protein</keyword>
<keyword id="KW-0694">RNA-binding</keyword>
<keyword id="KW-0699">rRNA-binding</keyword>
<protein>
    <recommendedName>
        <fullName evidence="1">Small ribosomal subunit protein uS11</fullName>
    </recommendedName>
    <alternativeName>
        <fullName evidence="2">30S ribosomal protein S11</fullName>
    </alternativeName>
</protein>
<accession>B1IQ02</accession>